<protein>
    <recommendedName>
        <fullName>RNA-binding protein 25</fullName>
    </recommendedName>
    <alternativeName>
        <fullName>RNA-binding motif protein 25</fullName>
    </alternativeName>
</protein>
<organism>
    <name type="scientific">Mus musculus</name>
    <name type="common">Mouse</name>
    <dbReference type="NCBI Taxonomy" id="10090"/>
    <lineage>
        <taxon>Eukaryota</taxon>
        <taxon>Metazoa</taxon>
        <taxon>Chordata</taxon>
        <taxon>Craniata</taxon>
        <taxon>Vertebrata</taxon>
        <taxon>Euteleostomi</taxon>
        <taxon>Mammalia</taxon>
        <taxon>Eutheria</taxon>
        <taxon>Euarchontoglires</taxon>
        <taxon>Glires</taxon>
        <taxon>Rodentia</taxon>
        <taxon>Myomorpha</taxon>
        <taxon>Muroidea</taxon>
        <taxon>Muridae</taxon>
        <taxon>Murinae</taxon>
        <taxon>Mus</taxon>
        <taxon>Mus</taxon>
    </lineage>
</organism>
<feature type="chain" id="PRO_0000368187" description="RNA-binding protein 25">
    <location>
        <begin position="1"/>
        <end position="838"/>
    </location>
</feature>
<feature type="domain" description="RRM" evidence="3">
    <location>
        <begin position="87"/>
        <end position="164"/>
    </location>
</feature>
<feature type="domain" description="PWI" evidence="4">
    <location>
        <begin position="745"/>
        <end position="838"/>
    </location>
</feature>
<feature type="region of interest" description="Disordered" evidence="5">
    <location>
        <begin position="1"/>
        <end position="30"/>
    </location>
</feature>
<feature type="region of interest" description="Disordered" evidence="5">
    <location>
        <begin position="173"/>
        <end position="201"/>
    </location>
</feature>
<feature type="region of interest" description="Disordered" evidence="5">
    <location>
        <begin position="220"/>
        <end position="242"/>
    </location>
</feature>
<feature type="region of interest" description="Disordered" evidence="5">
    <location>
        <begin position="282"/>
        <end position="437"/>
    </location>
</feature>
<feature type="region of interest" description="Necessary for nuclear speckle localization" evidence="1">
    <location>
        <begin position="284"/>
        <end position="639"/>
    </location>
</feature>
<feature type="region of interest" description="Disordered" evidence="5">
    <location>
        <begin position="493"/>
        <end position="683"/>
    </location>
</feature>
<feature type="compositionally biased region" description="Pro residues" evidence="5">
    <location>
        <begin position="12"/>
        <end position="30"/>
    </location>
</feature>
<feature type="compositionally biased region" description="Basic and acidic residues" evidence="5">
    <location>
        <begin position="282"/>
        <end position="428"/>
    </location>
</feature>
<feature type="compositionally biased region" description="Basic and acidic residues" evidence="5">
    <location>
        <begin position="516"/>
        <end position="568"/>
    </location>
</feature>
<feature type="compositionally biased region" description="Basic and acidic residues" evidence="5">
    <location>
        <begin position="585"/>
        <end position="594"/>
    </location>
</feature>
<feature type="compositionally biased region" description="Low complexity" evidence="5">
    <location>
        <begin position="616"/>
        <end position="625"/>
    </location>
</feature>
<feature type="compositionally biased region" description="Polar residues" evidence="5">
    <location>
        <begin position="669"/>
        <end position="678"/>
    </location>
</feature>
<feature type="modified residue" description="N6-acetyllysine" evidence="12">
    <location>
        <position position="135"/>
    </location>
</feature>
<feature type="modified residue" description="Phosphoserine" evidence="2">
    <location>
        <position position="225"/>
    </location>
</feature>
<feature type="modified residue" description="Phosphoserine" evidence="2">
    <location>
        <position position="228"/>
    </location>
</feature>
<feature type="modified residue" description="Phosphoserine" evidence="10">
    <location>
        <position position="578"/>
    </location>
</feature>
<feature type="modified residue" description="Phosphoserine" evidence="7 8 9 10 11">
    <location>
        <position position="672"/>
    </location>
</feature>
<feature type="modified residue" description="Phosphoserine" evidence="11">
    <location>
        <position position="678"/>
    </location>
</feature>
<feature type="modified residue" description="Phosphoserine" evidence="7 10 11">
    <location>
        <position position="698"/>
    </location>
</feature>
<feature type="cross-link" description="Glycyl lysine isopeptide (Lys-Gly) (interchain with G-Cter in SUMO2)" evidence="2">
    <location>
        <position position="260"/>
    </location>
</feature>
<feature type="cross-link" description="Glycyl lysine isopeptide (Lys-Gly) (interchain with G-Cter in SUMO2)" evidence="2">
    <location>
        <position position="272"/>
    </location>
</feature>
<feature type="cross-link" description="Glycyl lysine isopeptide (Lys-Gly) (interchain with G-Cter in SUMO2)" evidence="2">
    <location>
        <position position="425"/>
    </location>
</feature>
<feature type="cross-link" description="Glycyl lysine isopeptide (Lys-Gly) (interchain with G-Cter in SUMO2)" evidence="2">
    <location>
        <position position="573"/>
    </location>
</feature>
<feature type="cross-link" description="Glycyl lysine isopeptide (Lys-Gly) (interchain with G-Cter in SUMO2)" evidence="2">
    <location>
        <position position="666"/>
    </location>
</feature>
<feature type="cross-link" description="Glycyl lysine isopeptide (Lys-Gly) (interchain with G-Cter in SUMO2)" evidence="2">
    <location>
        <position position="683"/>
    </location>
</feature>
<feature type="cross-link" description="Glycyl lysine isopeptide (Lys-Gly) (interchain with G-Cter in SUMO2)" evidence="2">
    <location>
        <position position="692"/>
    </location>
</feature>
<feature type="cross-link" description="Glycyl lysine isopeptide (Lys-Gly) (interchain with G-Cter in SUMO2)" evidence="2">
    <location>
        <position position="717"/>
    </location>
</feature>
<feature type="sequence conflict" description="In Ref. 1; BAB27451." evidence="6" ref="1">
    <original>E</original>
    <variation>G</variation>
    <location>
        <position position="487"/>
    </location>
</feature>
<feature type="sequence conflict" description="In Ref. 2; AAH66150/AAH67400." evidence="6" ref="2">
    <original>S</original>
    <variation>F</variation>
    <location>
        <position position="578"/>
    </location>
</feature>
<feature type="sequence conflict" description="In Ref. 1; BAB27451." evidence="6" ref="1">
    <original>A</original>
    <variation>D</variation>
    <location>
        <position position="618"/>
    </location>
</feature>
<feature type="sequence conflict" description="In Ref. 1; BAB27451." evidence="6" ref="1">
    <original>K</original>
    <variation>R</variation>
    <location>
        <position position="666"/>
    </location>
</feature>
<name>RBM25_MOUSE</name>
<proteinExistence type="evidence at protein level"/>
<comment type="function">
    <text evidence="1">RNA-binding protein that acts as a regulator of alternative pre-mRNA splicing. Involved in apoptotic cell death through the regulation of the apoptotic factor BCL2L1 isoform expression. Modulates the ratio of proapoptotic BCL2L1 isoform S to antiapoptotic BCL2L1 isoform L mRNA expression. When overexpressed, stimulates proapoptotic BCL2L1 isoform S 5'-splice site (5'-ss) selection, whereas its depletion caused the accumulation of antiapoptotic BCL2L1 isoform L. Promotes BCL2L1 isoform S 5'-ss usage through the 5'-CGGGCA-3' RNA sequence. Its association with LUC7L3 promotes U1 snRNP binding to a weak 5' ss in a 5'-CGGGCA-3'-dependent manner. Binds to the exonic splicing enhancer 5'-CGGGCA-3' RNA sequence located within exon 2 of the BCL2L1 pre-mRNA (By similarity).</text>
</comment>
<comment type="subunit">
    <text evidence="1">Interacts with LUC7L3 and SRRM1 (By similarity). Specifically associates with functional splicing complexes, including Sm proteins and U1, U2, U4, U5 and U6 snRNAs (By similarity). Associates with exon junction complex (EJC) proteins, including APEX1, DDX39B, NCBP1, RBM8A and RNPS1. Interaction with NCBP1 is RNA-dependent (By similarity).</text>
</comment>
<comment type="subcellular location">
    <subcellularLocation>
        <location evidence="4">Nucleus speckle</location>
    </subcellularLocation>
    <subcellularLocation>
        <location evidence="1">Cytoplasm</location>
    </subcellularLocation>
    <text evidence="1">Colocalizes predominantly, with SFRS2 and LUC7L3 splicing factors, in nuclear speckles. Cytoplasmic localization is faint (By similarity).</text>
</comment>
<comment type="domain">
    <text evidence="1">The PWI domain binds nucleic acids with significant help from its N-terminal flanking basic region. It has an equal preference for binding to single- or double-stranded species, and it contributes to RBM25 role in modulation of alternative splicing, maybe by mediating RNA-dependent association with LUC7L3 (By similarity).</text>
</comment>
<comment type="PTM">
    <text evidence="1">Sumoylated.</text>
</comment>
<comment type="sequence caution" evidence="6">
    <conflict type="erroneous initiation">
        <sequence resource="EMBL-CDS" id="AAH10792"/>
    </conflict>
    <text>Truncated N-terminus.</text>
</comment>
<comment type="sequence caution" evidence="6">
    <conflict type="miscellaneous discrepancy">
        <sequence resource="EMBL-CDS" id="AAH10792"/>
    </conflict>
    <text>Probable cloning artifact.</text>
</comment>
<comment type="sequence caution" evidence="6">
    <conflict type="erroneous initiation">
        <sequence resource="EMBL-CDS" id="AAH66150"/>
    </conflict>
    <text>Truncated N-terminus.</text>
</comment>
<comment type="sequence caution" evidence="6">
    <conflict type="erroneous initiation">
        <sequence resource="EMBL-CDS" id="AAH67400"/>
    </conflict>
    <text>Truncated N-terminus.</text>
</comment>
<comment type="sequence caution" evidence="6">
    <conflict type="miscellaneous discrepancy">
        <sequence resource="EMBL-CDS" id="AAI58105"/>
    </conflict>
    <text>Aberrant splicing.</text>
</comment>
<comment type="sequence caution" evidence="6">
    <conflict type="erroneous initiation">
        <sequence resource="EMBL-CDS" id="BAB27451"/>
    </conflict>
    <text>Truncated N-terminus.</text>
</comment>
<comment type="sequence caution" evidence="6">
    <conflict type="erroneous initiation">
        <sequence resource="EMBL-CDS" id="BAE24941"/>
    </conflict>
    <text>Truncated N-terminus.</text>
</comment>
<reference key="1">
    <citation type="journal article" date="2005" name="Science">
        <title>The transcriptional landscape of the mammalian genome.</title>
        <authorList>
            <person name="Carninci P."/>
            <person name="Kasukawa T."/>
            <person name="Katayama S."/>
            <person name="Gough J."/>
            <person name="Frith M.C."/>
            <person name="Maeda N."/>
            <person name="Oyama R."/>
            <person name="Ravasi T."/>
            <person name="Lenhard B."/>
            <person name="Wells C."/>
            <person name="Kodzius R."/>
            <person name="Shimokawa K."/>
            <person name="Bajic V.B."/>
            <person name="Brenner S.E."/>
            <person name="Batalov S."/>
            <person name="Forrest A.R."/>
            <person name="Zavolan M."/>
            <person name="Davis M.J."/>
            <person name="Wilming L.G."/>
            <person name="Aidinis V."/>
            <person name="Allen J.E."/>
            <person name="Ambesi-Impiombato A."/>
            <person name="Apweiler R."/>
            <person name="Aturaliya R.N."/>
            <person name="Bailey T.L."/>
            <person name="Bansal M."/>
            <person name="Baxter L."/>
            <person name="Beisel K.W."/>
            <person name="Bersano T."/>
            <person name="Bono H."/>
            <person name="Chalk A.M."/>
            <person name="Chiu K.P."/>
            <person name="Choudhary V."/>
            <person name="Christoffels A."/>
            <person name="Clutterbuck D.R."/>
            <person name="Crowe M.L."/>
            <person name="Dalla E."/>
            <person name="Dalrymple B.P."/>
            <person name="de Bono B."/>
            <person name="Della Gatta G."/>
            <person name="di Bernardo D."/>
            <person name="Down T."/>
            <person name="Engstrom P."/>
            <person name="Fagiolini M."/>
            <person name="Faulkner G."/>
            <person name="Fletcher C.F."/>
            <person name="Fukushima T."/>
            <person name="Furuno M."/>
            <person name="Futaki S."/>
            <person name="Gariboldi M."/>
            <person name="Georgii-Hemming P."/>
            <person name="Gingeras T.R."/>
            <person name="Gojobori T."/>
            <person name="Green R.E."/>
            <person name="Gustincich S."/>
            <person name="Harbers M."/>
            <person name="Hayashi Y."/>
            <person name="Hensch T.K."/>
            <person name="Hirokawa N."/>
            <person name="Hill D."/>
            <person name="Huminiecki L."/>
            <person name="Iacono M."/>
            <person name="Ikeo K."/>
            <person name="Iwama A."/>
            <person name="Ishikawa T."/>
            <person name="Jakt M."/>
            <person name="Kanapin A."/>
            <person name="Katoh M."/>
            <person name="Kawasawa Y."/>
            <person name="Kelso J."/>
            <person name="Kitamura H."/>
            <person name="Kitano H."/>
            <person name="Kollias G."/>
            <person name="Krishnan S.P."/>
            <person name="Kruger A."/>
            <person name="Kummerfeld S.K."/>
            <person name="Kurochkin I.V."/>
            <person name="Lareau L.F."/>
            <person name="Lazarevic D."/>
            <person name="Lipovich L."/>
            <person name="Liu J."/>
            <person name="Liuni S."/>
            <person name="McWilliam S."/>
            <person name="Madan Babu M."/>
            <person name="Madera M."/>
            <person name="Marchionni L."/>
            <person name="Matsuda H."/>
            <person name="Matsuzawa S."/>
            <person name="Miki H."/>
            <person name="Mignone F."/>
            <person name="Miyake S."/>
            <person name="Morris K."/>
            <person name="Mottagui-Tabar S."/>
            <person name="Mulder N."/>
            <person name="Nakano N."/>
            <person name="Nakauchi H."/>
            <person name="Ng P."/>
            <person name="Nilsson R."/>
            <person name="Nishiguchi S."/>
            <person name="Nishikawa S."/>
            <person name="Nori F."/>
            <person name="Ohara O."/>
            <person name="Okazaki Y."/>
            <person name="Orlando V."/>
            <person name="Pang K.C."/>
            <person name="Pavan W.J."/>
            <person name="Pavesi G."/>
            <person name="Pesole G."/>
            <person name="Petrovsky N."/>
            <person name="Piazza S."/>
            <person name="Reed J."/>
            <person name="Reid J.F."/>
            <person name="Ring B.Z."/>
            <person name="Ringwald M."/>
            <person name="Rost B."/>
            <person name="Ruan Y."/>
            <person name="Salzberg S.L."/>
            <person name="Sandelin A."/>
            <person name="Schneider C."/>
            <person name="Schoenbach C."/>
            <person name="Sekiguchi K."/>
            <person name="Semple C.A."/>
            <person name="Seno S."/>
            <person name="Sessa L."/>
            <person name="Sheng Y."/>
            <person name="Shibata Y."/>
            <person name="Shimada H."/>
            <person name="Shimada K."/>
            <person name="Silva D."/>
            <person name="Sinclair B."/>
            <person name="Sperling S."/>
            <person name="Stupka E."/>
            <person name="Sugiura K."/>
            <person name="Sultana R."/>
            <person name="Takenaka Y."/>
            <person name="Taki K."/>
            <person name="Tammoja K."/>
            <person name="Tan S.L."/>
            <person name="Tang S."/>
            <person name="Taylor M.S."/>
            <person name="Tegner J."/>
            <person name="Teichmann S.A."/>
            <person name="Ueda H.R."/>
            <person name="van Nimwegen E."/>
            <person name="Verardo R."/>
            <person name="Wei C.L."/>
            <person name="Yagi K."/>
            <person name="Yamanishi H."/>
            <person name="Zabarovsky E."/>
            <person name="Zhu S."/>
            <person name="Zimmer A."/>
            <person name="Hide W."/>
            <person name="Bult C."/>
            <person name="Grimmond S.M."/>
            <person name="Teasdale R.D."/>
            <person name="Liu E.T."/>
            <person name="Brusic V."/>
            <person name="Quackenbush J."/>
            <person name="Wahlestedt C."/>
            <person name="Mattick J.S."/>
            <person name="Hume D.A."/>
            <person name="Kai C."/>
            <person name="Sasaki D."/>
            <person name="Tomaru Y."/>
            <person name="Fukuda S."/>
            <person name="Kanamori-Katayama M."/>
            <person name="Suzuki M."/>
            <person name="Aoki J."/>
            <person name="Arakawa T."/>
            <person name="Iida J."/>
            <person name="Imamura K."/>
            <person name="Itoh M."/>
            <person name="Kato T."/>
            <person name="Kawaji H."/>
            <person name="Kawagashira N."/>
            <person name="Kawashima T."/>
            <person name="Kojima M."/>
            <person name="Kondo S."/>
            <person name="Konno H."/>
            <person name="Nakano K."/>
            <person name="Ninomiya N."/>
            <person name="Nishio T."/>
            <person name="Okada M."/>
            <person name="Plessy C."/>
            <person name="Shibata K."/>
            <person name="Shiraki T."/>
            <person name="Suzuki S."/>
            <person name="Tagami M."/>
            <person name="Waki K."/>
            <person name="Watahiki A."/>
            <person name="Okamura-Oho Y."/>
            <person name="Suzuki H."/>
            <person name="Kawai J."/>
            <person name="Hayashizaki Y."/>
        </authorList>
    </citation>
    <scope>NUCLEOTIDE SEQUENCE [LARGE SCALE MRNA]</scope>
    <source>
        <strain>C57BL/6J</strain>
        <tissue>Embryo</tissue>
        <tissue>Embryonic eye</tissue>
        <tissue>Embryonic spinal ganglion</tissue>
        <tissue>Macrophage</tissue>
        <tissue>Testis</tissue>
    </source>
</reference>
<reference key="2">
    <citation type="journal article" date="2004" name="Genome Res.">
        <title>The status, quality, and expansion of the NIH full-length cDNA project: the Mammalian Gene Collection (MGC).</title>
        <authorList>
            <consortium name="The MGC Project Team"/>
        </authorList>
    </citation>
    <scope>NUCLEOTIDE SEQUENCE [LARGE SCALE MRNA]</scope>
    <source>
        <strain>C57BL/6J</strain>
        <tissue>Colon</tissue>
        <tissue>Embryonic germ cell</tissue>
    </source>
</reference>
<reference key="3">
    <citation type="journal article" date="2007" name="Proc. Natl. Acad. Sci. U.S.A.">
        <title>Large-scale phosphorylation analysis of mouse liver.</title>
        <authorList>
            <person name="Villen J."/>
            <person name="Beausoleil S.A."/>
            <person name="Gerber S.A."/>
            <person name="Gygi S.P."/>
        </authorList>
    </citation>
    <scope>PHOSPHORYLATION [LARGE SCALE ANALYSIS] AT SER-672 AND SER-698</scope>
    <scope>IDENTIFICATION BY MASS SPECTROMETRY [LARGE SCALE ANALYSIS]</scope>
    <source>
        <tissue>Liver</tissue>
    </source>
</reference>
<reference key="4">
    <citation type="journal article" date="2008" name="J. Proteome Res.">
        <title>Specific phosphopeptide enrichment with immobilized titanium ion affinity chromatography adsorbent for phosphoproteome analysis.</title>
        <authorList>
            <person name="Zhou H."/>
            <person name="Ye M."/>
            <person name="Dong J."/>
            <person name="Han G."/>
            <person name="Jiang X."/>
            <person name="Wu R."/>
            <person name="Zou H."/>
        </authorList>
    </citation>
    <scope>PHOSPHORYLATION [LARGE SCALE ANALYSIS] AT SER-672</scope>
    <scope>IDENTIFICATION BY MASS SPECTROMETRY [LARGE SCALE ANALYSIS]</scope>
    <source>
        <tissue>Liver</tissue>
    </source>
</reference>
<reference key="5">
    <citation type="journal article" date="2009" name="Immunity">
        <title>The phagosomal proteome in interferon-gamma-activated macrophages.</title>
        <authorList>
            <person name="Trost M."/>
            <person name="English L."/>
            <person name="Lemieux S."/>
            <person name="Courcelles M."/>
            <person name="Desjardins M."/>
            <person name="Thibault P."/>
        </authorList>
    </citation>
    <scope>PHOSPHORYLATION [LARGE SCALE ANALYSIS] AT SER-578; SER-672 AND SER-698</scope>
    <scope>IDENTIFICATION BY MASS SPECTROMETRY [LARGE SCALE ANALYSIS]</scope>
</reference>
<reference key="6">
    <citation type="journal article" date="2009" name="Mol. Cell. Proteomics">
        <title>Large scale localization of protein phosphorylation by use of electron capture dissociation mass spectrometry.</title>
        <authorList>
            <person name="Sweet S.M."/>
            <person name="Bailey C.M."/>
            <person name="Cunningham D.L."/>
            <person name="Heath J.K."/>
            <person name="Cooper H.J."/>
        </authorList>
    </citation>
    <scope>PHOSPHORYLATION [LARGE SCALE ANALYSIS] AT SER-672</scope>
    <scope>IDENTIFICATION BY MASS SPECTROMETRY [LARGE SCALE ANALYSIS]</scope>
    <source>
        <tissue>Embryonic fibroblast</tissue>
    </source>
</reference>
<reference key="7">
    <citation type="journal article" date="2010" name="Cell">
        <title>A tissue-specific atlas of mouse protein phosphorylation and expression.</title>
        <authorList>
            <person name="Huttlin E.L."/>
            <person name="Jedrychowski M.P."/>
            <person name="Elias J.E."/>
            <person name="Goswami T."/>
            <person name="Rad R."/>
            <person name="Beausoleil S.A."/>
            <person name="Villen J."/>
            <person name="Haas W."/>
            <person name="Sowa M.E."/>
            <person name="Gygi S.P."/>
        </authorList>
    </citation>
    <scope>PHOSPHORYLATION [LARGE SCALE ANALYSIS] AT SER-672; SER-678 AND SER-698</scope>
    <scope>IDENTIFICATION BY MASS SPECTROMETRY [LARGE SCALE ANALYSIS]</scope>
    <source>
        <tissue>Brain</tissue>
        <tissue>Brown adipose tissue</tissue>
        <tissue>Kidney</tissue>
        <tissue>Liver</tissue>
        <tissue>Lung</tissue>
        <tissue>Pancreas</tissue>
        <tissue>Spleen</tissue>
        <tissue>Testis</tissue>
    </source>
</reference>
<reference key="8">
    <citation type="journal article" date="2013" name="Mol. Cell">
        <title>SIRT5-mediated lysine desuccinylation impacts diverse metabolic pathways.</title>
        <authorList>
            <person name="Park J."/>
            <person name="Chen Y."/>
            <person name="Tishkoff D.X."/>
            <person name="Peng C."/>
            <person name="Tan M."/>
            <person name="Dai L."/>
            <person name="Xie Z."/>
            <person name="Zhang Y."/>
            <person name="Zwaans B.M."/>
            <person name="Skinner M.E."/>
            <person name="Lombard D.B."/>
            <person name="Zhao Y."/>
        </authorList>
    </citation>
    <scope>ACETYLATION [LARGE SCALE ANALYSIS] AT LYS-135</scope>
    <scope>IDENTIFICATION BY MASS SPECTROMETRY [LARGE SCALE ANALYSIS]</scope>
    <source>
        <tissue>Embryonic fibroblast</tissue>
    </source>
</reference>
<dbReference type="EMBL" id="AK011184">
    <property type="protein sequence ID" value="BAB27451.2"/>
    <property type="status" value="ALT_INIT"/>
    <property type="molecule type" value="mRNA"/>
</dbReference>
<dbReference type="EMBL" id="AK011403">
    <property type="protein sequence ID" value="BAB27595.3"/>
    <property type="molecule type" value="mRNA"/>
</dbReference>
<dbReference type="EMBL" id="AK076553">
    <property type="protein sequence ID" value="BAC36389.1"/>
    <property type="molecule type" value="mRNA"/>
</dbReference>
<dbReference type="EMBL" id="AK142132">
    <property type="protein sequence ID" value="BAE24941.1"/>
    <property type="status" value="ALT_INIT"/>
    <property type="molecule type" value="mRNA"/>
</dbReference>
<dbReference type="EMBL" id="AK151910">
    <property type="protein sequence ID" value="BAE30791.1"/>
    <property type="molecule type" value="mRNA"/>
</dbReference>
<dbReference type="EMBL" id="AK164367">
    <property type="protein sequence ID" value="BAE37760.1"/>
    <property type="molecule type" value="mRNA"/>
</dbReference>
<dbReference type="EMBL" id="BC158104">
    <property type="protein sequence ID" value="AAI58105.1"/>
    <property type="status" value="ALT_SEQ"/>
    <property type="molecule type" value="mRNA"/>
</dbReference>
<dbReference type="EMBL" id="BC010792">
    <property type="protein sequence ID" value="AAH10792.1"/>
    <property type="status" value="ALT_SEQ"/>
    <property type="molecule type" value="mRNA"/>
</dbReference>
<dbReference type="EMBL" id="BC066150">
    <property type="protein sequence ID" value="AAH66150.1"/>
    <property type="status" value="ALT_INIT"/>
    <property type="molecule type" value="mRNA"/>
</dbReference>
<dbReference type="EMBL" id="BC067400">
    <property type="protein sequence ID" value="AAH67400.1"/>
    <property type="status" value="ALT_INIT"/>
    <property type="molecule type" value="mRNA"/>
</dbReference>
<dbReference type="CCDS" id="CCDS49107.1"/>
<dbReference type="RefSeq" id="NP_001351345.1">
    <property type="nucleotide sequence ID" value="NM_001364416.1"/>
</dbReference>
<dbReference type="RefSeq" id="NP_081625.3">
    <property type="nucleotide sequence ID" value="NM_027349.4"/>
</dbReference>
<dbReference type="RefSeq" id="XP_006516230.1">
    <property type="nucleotide sequence ID" value="XM_006516167.3"/>
</dbReference>
<dbReference type="RefSeq" id="XP_006516231.1">
    <property type="nucleotide sequence ID" value="XM_006516168.5"/>
</dbReference>
<dbReference type="RefSeq" id="XP_006516232.1">
    <property type="nucleotide sequence ID" value="XM_006516169.3"/>
</dbReference>
<dbReference type="RefSeq" id="XP_017170651.1">
    <property type="nucleotide sequence ID" value="XM_017315162.1"/>
</dbReference>
<dbReference type="RefSeq" id="XP_030102738.1">
    <property type="nucleotide sequence ID" value="XM_030246878.2"/>
</dbReference>
<dbReference type="RefSeq" id="XP_036013484.1">
    <property type="nucleotide sequence ID" value="XM_036157591.1"/>
</dbReference>
<dbReference type="RefSeq" id="XP_036013485.1">
    <property type="nucleotide sequence ID" value="XM_036157592.1"/>
</dbReference>
<dbReference type="SMR" id="B2RY56"/>
<dbReference type="BioGRID" id="211893">
    <property type="interactions" value="21"/>
</dbReference>
<dbReference type="FunCoup" id="B2RY56">
    <property type="interactions" value="4333"/>
</dbReference>
<dbReference type="IntAct" id="B2RY56">
    <property type="interactions" value="3"/>
</dbReference>
<dbReference type="MINT" id="B2RY56"/>
<dbReference type="STRING" id="10090.ENSMUSP00000048470"/>
<dbReference type="GlyGen" id="B2RY56">
    <property type="glycosylation" value="2 sites, 1 N-linked glycan (1 site), 1 O-linked glycan (1 site)"/>
</dbReference>
<dbReference type="iPTMnet" id="B2RY56"/>
<dbReference type="PhosphoSitePlus" id="B2RY56"/>
<dbReference type="SwissPalm" id="B2RY56"/>
<dbReference type="jPOST" id="B2RY56"/>
<dbReference type="PaxDb" id="10090-ENSMUSP00000048470"/>
<dbReference type="PeptideAtlas" id="B2RY56"/>
<dbReference type="ProteomicsDB" id="253181"/>
<dbReference type="Pumba" id="B2RY56"/>
<dbReference type="Antibodypedia" id="158">
    <property type="antibodies" value="69 antibodies from 18 providers"/>
</dbReference>
<dbReference type="DNASU" id="67039"/>
<dbReference type="Ensembl" id="ENSMUST00000048155.16">
    <property type="protein sequence ID" value="ENSMUSP00000048470.9"/>
    <property type="gene ID" value="ENSMUSG00000010608.16"/>
</dbReference>
<dbReference type="GeneID" id="67039"/>
<dbReference type="KEGG" id="mmu:67039"/>
<dbReference type="UCSC" id="uc007odj.1">
    <property type="organism name" value="mouse"/>
</dbReference>
<dbReference type="AGR" id="MGI:1914289"/>
<dbReference type="CTD" id="58517"/>
<dbReference type="MGI" id="MGI:1914289">
    <property type="gene designation" value="Rbm25"/>
</dbReference>
<dbReference type="VEuPathDB" id="HostDB:ENSMUSG00000010608"/>
<dbReference type="eggNOG" id="KOG2253">
    <property type="taxonomic scope" value="Eukaryota"/>
</dbReference>
<dbReference type="GeneTree" id="ENSGT00730000111019"/>
<dbReference type="HOGENOM" id="CLU_009855_0_0_1"/>
<dbReference type="InParanoid" id="B2RY56"/>
<dbReference type="OMA" id="DGCVNKK"/>
<dbReference type="OrthoDB" id="6275295at2759"/>
<dbReference type="PhylomeDB" id="B2RY56"/>
<dbReference type="TreeFam" id="TF320185"/>
<dbReference type="Reactome" id="R-MMU-72163">
    <property type="pathway name" value="mRNA Splicing - Major Pathway"/>
</dbReference>
<dbReference type="BioGRID-ORCS" id="67039">
    <property type="hits" value="33 hits in 77 CRISPR screens"/>
</dbReference>
<dbReference type="ChiTaRS" id="Rbm25">
    <property type="organism name" value="mouse"/>
</dbReference>
<dbReference type="PRO" id="PR:B2RY56"/>
<dbReference type="Proteomes" id="UP000000589">
    <property type="component" value="Chromosome 12"/>
</dbReference>
<dbReference type="RNAct" id="B2RY56">
    <property type="molecule type" value="protein"/>
</dbReference>
<dbReference type="Bgee" id="ENSMUSG00000010608">
    <property type="expression patterns" value="Expressed in undifferentiated genital tubercle and 260 other cell types or tissues"/>
</dbReference>
<dbReference type="ExpressionAtlas" id="B2RY56">
    <property type="expression patterns" value="baseline and differential"/>
</dbReference>
<dbReference type="GO" id="GO:0005737">
    <property type="term" value="C:cytoplasm"/>
    <property type="evidence" value="ECO:0007669"/>
    <property type="project" value="UniProtKB-SubCell"/>
</dbReference>
<dbReference type="GO" id="GO:0016607">
    <property type="term" value="C:nuclear speck"/>
    <property type="evidence" value="ECO:0000250"/>
    <property type="project" value="UniProtKB"/>
</dbReference>
<dbReference type="GO" id="GO:0003729">
    <property type="term" value="F:mRNA binding"/>
    <property type="evidence" value="ECO:0000250"/>
    <property type="project" value="UniProtKB"/>
</dbReference>
<dbReference type="GO" id="GO:0006915">
    <property type="term" value="P:apoptotic process"/>
    <property type="evidence" value="ECO:0007669"/>
    <property type="project" value="UniProtKB-KW"/>
</dbReference>
<dbReference type="GO" id="GO:0006397">
    <property type="term" value="P:mRNA processing"/>
    <property type="evidence" value="ECO:0007669"/>
    <property type="project" value="UniProtKB-KW"/>
</dbReference>
<dbReference type="GO" id="GO:0000381">
    <property type="term" value="P:regulation of alternative mRNA splicing, via spliceosome"/>
    <property type="evidence" value="ECO:0000250"/>
    <property type="project" value="UniProtKB"/>
</dbReference>
<dbReference type="GO" id="GO:0042981">
    <property type="term" value="P:regulation of apoptotic process"/>
    <property type="evidence" value="ECO:0000250"/>
    <property type="project" value="UniProtKB"/>
</dbReference>
<dbReference type="GO" id="GO:0008380">
    <property type="term" value="P:RNA splicing"/>
    <property type="evidence" value="ECO:0007669"/>
    <property type="project" value="UniProtKB-KW"/>
</dbReference>
<dbReference type="CDD" id="cd12446">
    <property type="entry name" value="RRM_RBM25"/>
    <property type="match status" value="1"/>
</dbReference>
<dbReference type="FunFam" id="1.20.1390.10:FF:000004">
    <property type="entry name" value="RNA-binding motif protein 25"/>
    <property type="match status" value="1"/>
</dbReference>
<dbReference type="FunFam" id="3.30.70.330:FF:000230">
    <property type="entry name" value="RNA-binding motif protein 25"/>
    <property type="match status" value="1"/>
</dbReference>
<dbReference type="Gene3D" id="3.30.70.330">
    <property type="match status" value="1"/>
</dbReference>
<dbReference type="Gene3D" id="1.20.1390.10">
    <property type="entry name" value="PWI domain"/>
    <property type="match status" value="1"/>
</dbReference>
<dbReference type="InterPro" id="IPR012677">
    <property type="entry name" value="Nucleotide-bd_a/b_plait_sf"/>
</dbReference>
<dbReference type="InterPro" id="IPR002483">
    <property type="entry name" value="PWI_dom"/>
</dbReference>
<dbReference type="InterPro" id="IPR036483">
    <property type="entry name" value="PWI_dom_sf"/>
</dbReference>
<dbReference type="InterPro" id="IPR035979">
    <property type="entry name" value="RBD_domain_sf"/>
</dbReference>
<dbReference type="InterPro" id="IPR052768">
    <property type="entry name" value="RBM25"/>
</dbReference>
<dbReference type="InterPro" id="IPR034268">
    <property type="entry name" value="RBM25_RRM"/>
</dbReference>
<dbReference type="InterPro" id="IPR000504">
    <property type="entry name" value="RRM_dom"/>
</dbReference>
<dbReference type="PANTHER" id="PTHR18806">
    <property type="entry name" value="RBM25 PROTEIN"/>
    <property type="match status" value="1"/>
</dbReference>
<dbReference type="PANTHER" id="PTHR18806:SF4">
    <property type="entry name" value="RNA-BINDING PROTEIN 25"/>
    <property type="match status" value="1"/>
</dbReference>
<dbReference type="Pfam" id="PF01480">
    <property type="entry name" value="PWI"/>
    <property type="match status" value="1"/>
</dbReference>
<dbReference type="Pfam" id="PF00076">
    <property type="entry name" value="RRM_1"/>
    <property type="match status" value="1"/>
</dbReference>
<dbReference type="SMART" id="SM00311">
    <property type="entry name" value="PWI"/>
    <property type="match status" value="1"/>
</dbReference>
<dbReference type="SMART" id="SM00360">
    <property type="entry name" value="RRM"/>
    <property type="match status" value="1"/>
</dbReference>
<dbReference type="SUPFAM" id="SSF101233">
    <property type="entry name" value="PWI domain"/>
    <property type="match status" value="1"/>
</dbReference>
<dbReference type="SUPFAM" id="SSF54928">
    <property type="entry name" value="RNA-binding domain, RBD"/>
    <property type="match status" value="1"/>
</dbReference>
<dbReference type="PROSITE" id="PS51025">
    <property type="entry name" value="PWI"/>
    <property type="match status" value="1"/>
</dbReference>
<dbReference type="PROSITE" id="PS50102">
    <property type="entry name" value="RRM"/>
    <property type="match status" value="1"/>
</dbReference>
<gene>
    <name type="primary">Rbm25</name>
</gene>
<accession>B2RY56</accession>
<accession>Q3TPH6</accession>
<accession>Q3U976</accession>
<accession>Q3UQU7</accession>
<accession>Q6NWW2</accession>
<accession>Q8BVT8</accession>
<accession>Q91XE6</accession>
<accession>Q9CT27</accession>
<accession>Q9CT49</accession>
<sequence>MSFPPHLNRPPMGIPALPPGIPPPQFPGFPPPVPPGTPMIPVPMSIMAPAPTVLVPTVSMVGKHLGARKDHPGLKLKENDENCGPTTTVFVGNISEKASDMLIRQLLAKCGLVLSWKRVQGASGKLQAFGFCEYKEPESTLRALRLLHDLQIGEKKLLVKVDAKTKAQLDEWKAKKKANGNARPETVTNDDEEALDEETKRRDQMIKGAIEVLIREYSSELNAPSQESDSHPRKKKKEKKEDIFRRFPVAPLIPYPLITKEDINAIEMEEDKRDLISREISKFRDTHKKLEEEKGKKEKERQEIEKERRERERERERERERREREREREREREREKEKERERERERDRDRDRTKERDRDRERDRDRDRERSSDRNKDRSRSREKSRDREREREREREREREREREREREREREREREREREKDKKRDREEDEEDAYERRKLERKLREKEAAYQERLKNWEIRERKKTREYEKEAEREEERRREMAKEAKRLKEFLEDYDDDRDDPKYYRGSALQKRLRDREKEMEADERDRKREKEELEEIRQRLLAEGHPDPDAELQRMEQEAERRRQPQIKQEPESEEEEEEKQEKEEKREEPVEEEEEPEQKPCLKPTLRPISSAPSVSSASGNATPNTPGDESPCGIIIPHENSPDQQQPEEHRPKIGLSLKLGASNSPGQPNSVKRKKLPVDSVFNKFEDEDSDDVPRKRKLVPLDYGEDDKNATKGTVNTEEKRKHIKSLIEKIPTAKPELFAYPLDWSIVDSILMERRIRPWINKKIIEYIGEEEATLVDFVCSKVMAHSSPQSILDDVAMVLDEEAEVFIVKMWRLLIYETEAKKIGLVK</sequence>
<evidence type="ECO:0000250" key="1"/>
<evidence type="ECO:0000250" key="2">
    <source>
        <dbReference type="UniProtKB" id="P49756"/>
    </source>
</evidence>
<evidence type="ECO:0000255" key="3">
    <source>
        <dbReference type="PROSITE-ProRule" id="PRU00176"/>
    </source>
</evidence>
<evidence type="ECO:0000255" key="4">
    <source>
        <dbReference type="PROSITE-ProRule" id="PRU00627"/>
    </source>
</evidence>
<evidence type="ECO:0000256" key="5">
    <source>
        <dbReference type="SAM" id="MobiDB-lite"/>
    </source>
</evidence>
<evidence type="ECO:0000305" key="6"/>
<evidence type="ECO:0007744" key="7">
    <source>
    </source>
</evidence>
<evidence type="ECO:0007744" key="8">
    <source>
    </source>
</evidence>
<evidence type="ECO:0007744" key="9">
    <source>
    </source>
</evidence>
<evidence type="ECO:0007744" key="10">
    <source>
    </source>
</evidence>
<evidence type="ECO:0007744" key="11">
    <source>
    </source>
</evidence>
<evidence type="ECO:0007744" key="12">
    <source>
    </source>
</evidence>
<keyword id="KW-0007">Acetylation</keyword>
<keyword id="KW-0053">Apoptosis</keyword>
<keyword id="KW-0963">Cytoplasm</keyword>
<keyword id="KW-1017">Isopeptide bond</keyword>
<keyword id="KW-0507">mRNA processing</keyword>
<keyword id="KW-0508">mRNA splicing</keyword>
<keyword id="KW-0539">Nucleus</keyword>
<keyword id="KW-0597">Phosphoprotein</keyword>
<keyword id="KW-1185">Reference proteome</keyword>
<keyword id="KW-0694">RNA-binding</keyword>
<keyword id="KW-0832">Ubl conjugation</keyword>